<protein>
    <recommendedName>
        <fullName evidence="2">Large ribosomal subunit protein P1</fullName>
    </recommendedName>
    <alternativeName>
        <fullName>60S acidic ribosomal protein P1</fullName>
    </alternativeName>
    <alternativeName>
        <fullName>Ribosomal protein L37</fullName>
    </alternativeName>
</protein>
<name>RLA1_TETTH</name>
<sequence>MSTTEIEKVVKGASYSALLLNDCGLPITAANIAALFKTAKLNGHETTFKTFEDFLKTNPITNYIGAIGGSAPAAASSAPAKKEEPKKEEPKKEEPKEEETDMDMGDLFG</sequence>
<organism>
    <name type="scientific">Tetrahymena thermophila</name>
    <dbReference type="NCBI Taxonomy" id="5911"/>
    <lineage>
        <taxon>Eukaryota</taxon>
        <taxon>Sar</taxon>
        <taxon>Alveolata</taxon>
        <taxon>Ciliophora</taxon>
        <taxon>Intramacronucleata</taxon>
        <taxon>Oligohymenophorea</taxon>
        <taxon>Hymenostomatida</taxon>
        <taxon>Tetrahymenina</taxon>
        <taxon>Tetrahymenidae</taxon>
        <taxon>Tetrahymena</taxon>
    </lineage>
</organism>
<reference key="1">
    <citation type="journal article" date="1991" name="Gene">
        <title>Tetrahymena thermophila acidic ribosomal protein L37 contains an archaebacterial type of C-terminus.</title>
        <authorList>
            <person name="Hansen T.S."/>
            <person name="Andreasen P.H."/>
            <person name="Dreisig H."/>
            <person name="Hoejrup P."/>
            <person name="Nielsen H."/>
            <person name="Engberg J."/>
            <person name="Kristiansen K."/>
        </authorList>
    </citation>
    <scope>NUCLEOTIDE SEQUENCE [MRNA]</scope>
    <scope>PROTEIN SEQUENCE OF 34-99</scope>
</reference>
<evidence type="ECO:0000256" key="1">
    <source>
        <dbReference type="SAM" id="MobiDB-lite"/>
    </source>
</evidence>
<evidence type="ECO:0000305" key="2"/>
<gene>
    <name type="primary">RPLP1</name>
    <name type="synonym">L37</name>
</gene>
<feature type="chain" id="PRO_0000157710" description="Large ribosomal subunit protein P1">
    <location>
        <begin position="1"/>
        <end position="109"/>
    </location>
</feature>
<feature type="repeat" description="1">
    <location>
        <begin position="81"/>
        <end position="85"/>
    </location>
</feature>
<feature type="repeat" description="2">
    <location>
        <begin position="86"/>
        <end position="90"/>
    </location>
</feature>
<feature type="repeat" description="3">
    <location>
        <begin position="91"/>
        <end position="95"/>
    </location>
</feature>
<feature type="region of interest" description="Disordered" evidence="1">
    <location>
        <begin position="71"/>
        <end position="109"/>
    </location>
</feature>
<feature type="region of interest" description="3 X 5 AA tandem repeats of K-K-E-E-P">
    <location>
        <begin position="81"/>
        <end position="95"/>
    </location>
</feature>
<feature type="compositionally biased region" description="Basic and acidic residues" evidence="1">
    <location>
        <begin position="80"/>
        <end position="95"/>
    </location>
</feature>
<feature type="compositionally biased region" description="Acidic residues" evidence="1">
    <location>
        <begin position="96"/>
        <end position="109"/>
    </location>
</feature>
<keyword id="KW-0903">Direct protein sequencing</keyword>
<keyword id="KW-0677">Repeat</keyword>
<keyword id="KW-0687">Ribonucleoprotein</keyword>
<keyword id="KW-0689">Ribosomal protein</keyword>
<dbReference type="EMBL" id="M59428">
    <property type="protein sequence ID" value="AAA30126.1"/>
    <property type="molecule type" value="mRNA"/>
</dbReference>
<dbReference type="PIR" id="JT0597">
    <property type="entry name" value="R6TE1T"/>
</dbReference>
<dbReference type="SMR" id="P24002"/>
<dbReference type="OMA" id="PITNYIG"/>
<dbReference type="GO" id="GO:0022625">
    <property type="term" value="C:cytosolic large ribosomal subunit"/>
    <property type="evidence" value="ECO:0007669"/>
    <property type="project" value="TreeGrafter"/>
</dbReference>
<dbReference type="GO" id="GO:0030295">
    <property type="term" value="F:protein kinase activator activity"/>
    <property type="evidence" value="ECO:0007669"/>
    <property type="project" value="TreeGrafter"/>
</dbReference>
<dbReference type="GO" id="GO:0043021">
    <property type="term" value="F:ribonucleoprotein complex binding"/>
    <property type="evidence" value="ECO:0007669"/>
    <property type="project" value="TreeGrafter"/>
</dbReference>
<dbReference type="GO" id="GO:0003735">
    <property type="term" value="F:structural constituent of ribosome"/>
    <property type="evidence" value="ECO:0007669"/>
    <property type="project" value="InterPro"/>
</dbReference>
<dbReference type="GO" id="GO:0002181">
    <property type="term" value="P:cytoplasmic translation"/>
    <property type="evidence" value="ECO:0007669"/>
    <property type="project" value="TreeGrafter"/>
</dbReference>
<dbReference type="GO" id="GO:0006414">
    <property type="term" value="P:translational elongation"/>
    <property type="evidence" value="ECO:0007669"/>
    <property type="project" value="InterPro"/>
</dbReference>
<dbReference type="CDD" id="cd05831">
    <property type="entry name" value="Ribosomal_P1"/>
    <property type="match status" value="1"/>
</dbReference>
<dbReference type="Gene3D" id="1.10.10.1410">
    <property type="match status" value="1"/>
</dbReference>
<dbReference type="HAMAP" id="MF_01478">
    <property type="entry name" value="Ribosomal_L12_arch"/>
    <property type="match status" value="1"/>
</dbReference>
<dbReference type="InterPro" id="IPR038716">
    <property type="entry name" value="P1/P2_N_sf"/>
</dbReference>
<dbReference type="InterPro" id="IPR027534">
    <property type="entry name" value="Ribosomal_P1/P2"/>
</dbReference>
<dbReference type="PANTHER" id="PTHR45696">
    <property type="entry name" value="60S ACIDIC RIBOSOMAL PROTEIN P1"/>
    <property type="match status" value="1"/>
</dbReference>
<dbReference type="PANTHER" id="PTHR45696:SF10">
    <property type="entry name" value="LARGE RIBOSOMAL SUBUNIT PROTEIN P1"/>
    <property type="match status" value="1"/>
</dbReference>
<dbReference type="Pfam" id="PF00428">
    <property type="entry name" value="Ribosomal_60s"/>
    <property type="match status" value="1"/>
</dbReference>
<comment type="PTM">
    <text>Not phosphorylated.</text>
</comment>
<comment type="similarity">
    <text evidence="2">Belongs to the eukaryotic ribosomal protein P1/P2 family.</text>
</comment>
<accession>P24002</accession>
<proteinExistence type="evidence at protein level"/>